<evidence type="ECO:0000255" key="1">
    <source>
        <dbReference type="HAMAP-Rule" id="MF_01077"/>
    </source>
</evidence>
<sequence>MAKDEVVDRVTALAESLLSSQEMELVDIEYKREGRHMVLRLFVDKAGGITLDDCALVSREFSEILDVEDFISENYTLEVSSPGLNRPLKRESDYERYRGRLVKVRTYDVVEDEAGNRRKTFLGDLEGLAGGVVTLKLREGQMARIPLAKIAKANLEFEF</sequence>
<feature type="chain" id="PRO_0000229240" description="Ribosome maturation factor RimP">
    <location>
        <begin position="1"/>
        <end position="159"/>
    </location>
</feature>
<gene>
    <name evidence="1" type="primary">rimP</name>
    <name type="ordered locus">Gmet_1583</name>
</gene>
<accession>Q39VA9</accession>
<keyword id="KW-0963">Cytoplasm</keyword>
<keyword id="KW-1185">Reference proteome</keyword>
<keyword id="KW-0690">Ribosome biogenesis</keyword>
<comment type="function">
    <text evidence="1">Required for maturation of 30S ribosomal subunits.</text>
</comment>
<comment type="subcellular location">
    <subcellularLocation>
        <location evidence="1">Cytoplasm</location>
    </subcellularLocation>
</comment>
<comment type="similarity">
    <text evidence="1">Belongs to the RimP family.</text>
</comment>
<protein>
    <recommendedName>
        <fullName evidence="1">Ribosome maturation factor RimP</fullName>
    </recommendedName>
</protein>
<proteinExistence type="inferred from homology"/>
<dbReference type="EMBL" id="CP000148">
    <property type="protein sequence ID" value="ABB31815.1"/>
    <property type="molecule type" value="Genomic_DNA"/>
</dbReference>
<dbReference type="RefSeq" id="WP_004511482.1">
    <property type="nucleotide sequence ID" value="NC_007517.1"/>
</dbReference>
<dbReference type="SMR" id="Q39VA9"/>
<dbReference type="STRING" id="269799.Gmet_1583"/>
<dbReference type="KEGG" id="gme:Gmet_1583"/>
<dbReference type="eggNOG" id="COG0779">
    <property type="taxonomic scope" value="Bacteria"/>
</dbReference>
<dbReference type="HOGENOM" id="CLU_070525_2_2_7"/>
<dbReference type="Proteomes" id="UP000007073">
    <property type="component" value="Chromosome"/>
</dbReference>
<dbReference type="GO" id="GO:0005829">
    <property type="term" value="C:cytosol"/>
    <property type="evidence" value="ECO:0007669"/>
    <property type="project" value="TreeGrafter"/>
</dbReference>
<dbReference type="GO" id="GO:0000028">
    <property type="term" value="P:ribosomal small subunit assembly"/>
    <property type="evidence" value="ECO:0007669"/>
    <property type="project" value="TreeGrafter"/>
</dbReference>
<dbReference type="GO" id="GO:0006412">
    <property type="term" value="P:translation"/>
    <property type="evidence" value="ECO:0007669"/>
    <property type="project" value="TreeGrafter"/>
</dbReference>
<dbReference type="CDD" id="cd01734">
    <property type="entry name" value="YlxS_C"/>
    <property type="match status" value="1"/>
</dbReference>
<dbReference type="FunFam" id="3.30.300.70:FF:000001">
    <property type="entry name" value="Ribosome maturation factor RimP"/>
    <property type="match status" value="1"/>
</dbReference>
<dbReference type="Gene3D" id="2.30.30.180">
    <property type="entry name" value="Ribosome maturation factor RimP, C-terminal domain"/>
    <property type="match status" value="1"/>
</dbReference>
<dbReference type="Gene3D" id="3.30.300.70">
    <property type="entry name" value="RimP-like superfamily, N-terminal"/>
    <property type="match status" value="1"/>
</dbReference>
<dbReference type="HAMAP" id="MF_01077">
    <property type="entry name" value="RimP"/>
    <property type="match status" value="1"/>
</dbReference>
<dbReference type="InterPro" id="IPR003728">
    <property type="entry name" value="Ribosome_maturation_RimP"/>
</dbReference>
<dbReference type="InterPro" id="IPR028998">
    <property type="entry name" value="RimP_C"/>
</dbReference>
<dbReference type="InterPro" id="IPR036847">
    <property type="entry name" value="RimP_C_sf"/>
</dbReference>
<dbReference type="InterPro" id="IPR028989">
    <property type="entry name" value="RimP_N"/>
</dbReference>
<dbReference type="InterPro" id="IPR035956">
    <property type="entry name" value="RimP_N_sf"/>
</dbReference>
<dbReference type="NCBIfam" id="NF011241">
    <property type="entry name" value="PRK14647.1"/>
    <property type="match status" value="1"/>
</dbReference>
<dbReference type="PANTHER" id="PTHR33867">
    <property type="entry name" value="RIBOSOME MATURATION FACTOR RIMP"/>
    <property type="match status" value="1"/>
</dbReference>
<dbReference type="PANTHER" id="PTHR33867:SF1">
    <property type="entry name" value="RIBOSOME MATURATION FACTOR RIMP"/>
    <property type="match status" value="1"/>
</dbReference>
<dbReference type="Pfam" id="PF17384">
    <property type="entry name" value="DUF150_C"/>
    <property type="match status" value="1"/>
</dbReference>
<dbReference type="Pfam" id="PF02576">
    <property type="entry name" value="RimP_N"/>
    <property type="match status" value="1"/>
</dbReference>
<dbReference type="SUPFAM" id="SSF74942">
    <property type="entry name" value="YhbC-like, C-terminal domain"/>
    <property type="match status" value="1"/>
</dbReference>
<dbReference type="SUPFAM" id="SSF75420">
    <property type="entry name" value="YhbC-like, N-terminal domain"/>
    <property type="match status" value="1"/>
</dbReference>
<name>RIMP_GEOMG</name>
<reference key="1">
    <citation type="journal article" date="2009" name="BMC Microbiol.">
        <title>The genome sequence of Geobacter metallireducens: features of metabolism, physiology and regulation common and dissimilar to Geobacter sulfurreducens.</title>
        <authorList>
            <person name="Aklujkar M."/>
            <person name="Krushkal J."/>
            <person name="DiBartolo G."/>
            <person name="Lapidus A."/>
            <person name="Land M.L."/>
            <person name="Lovley D.R."/>
        </authorList>
    </citation>
    <scope>NUCLEOTIDE SEQUENCE [LARGE SCALE GENOMIC DNA]</scope>
    <source>
        <strain>ATCC 53774 / DSM 7210 / GS-15</strain>
    </source>
</reference>
<organism>
    <name type="scientific">Geobacter metallireducens (strain ATCC 53774 / DSM 7210 / GS-15)</name>
    <dbReference type="NCBI Taxonomy" id="269799"/>
    <lineage>
        <taxon>Bacteria</taxon>
        <taxon>Pseudomonadati</taxon>
        <taxon>Thermodesulfobacteriota</taxon>
        <taxon>Desulfuromonadia</taxon>
        <taxon>Geobacterales</taxon>
        <taxon>Geobacteraceae</taxon>
        <taxon>Geobacter</taxon>
    </lineage>
</organism>